<dbReference type="EMBL" id="AF124511">
    <property type="protein sequence ID" value="AAD51779.1"/>
    <property type="status" value="ALT_INIT"/>
    <property type="molecule type" value="mRNA"/>
</dbReference>
<dbReference type="EMBL" id="AF208398">
    <property type="protein sequence ID" value="AAG23410.1"/>
    <property type="molecule type" value="mRNA"/>
</dbReference>
<dbReference type="EMBL" id="AF208399">
    <property type="protein sequence ID" value="AAG23411.1"/>
    <property type="molecule type" value="mRNA"/>
</dbReference>
<dbReference type="EMBL" id="AF208400">
    <property type="protein sequence ID" value="AAG23412.1"/>
    <property type="molecule type" value="mRNA"/>
</dbReference>
<dbReference type="EMBL" id="AF208401">
    <property type="protein sequence ID" value="AAG23413.1"/>
    <property type="molecule type" value="mRNA"/>
</dbReference>
<dbReference type="RefSeq" id="NP_001001299.2">
    <molecule id="Q9DG23-1"/>
    <property type="nucleotide sequence ID" value="NM_001001299.2"/>
</dbReference>
<dbReference type="SMR" id="Q9DG23"/>
<dbReference type="FunCoup" id="Q9DG23">
    <property type="interactions" value="169"/>
</dbReference>
<dbReference type="STRING" id="9031.ENSGALP00000036453"/>
<dbReference type="GlyCosmos" id="Q9DG23">
    <property type="glycosylation" value="2 sites, No reported glycans"/>
</dbReference>
<dbReference type="GlyGen" id="Q9DG23">
    <property type="glycosylation" value="2 sites"/>
</dbReference>
<dbReference type="PaxDb" id="9031-ENSGALP00000036453"/>
<dbReference type="GeneID" id="408032"/>
<dbReference type="KEGG" id="gga:408032"/>
<dbReference type="CTD" id="33083"/>
<dbReference type="VEuPathDB" id="HostDB:geneid_408032"/>
<dbReference type="eggNOG" id="ENOG502QRV2">
    <property type="taxonomic scope" value="Eukaryota"/>
</dbReference>
<dbReference type="HOGENOM" id="CLU_048494_0_0_1"/>
<dbReference type="InParanoid" id="Q9DG23"/>
<dbReference type="OMA" id="SCQEWEQ"/>
<dbReference type="OrthoDB" id="425611at2759"/>
<dbReference type="PhylomeDB" id="Q9DG23"/>
<dbReference type="PRO" id="PR:Q9DG23"/>
<dbReference type="Proteomes" id="UP000000539">
    <property type="component" value="Unassembled WGS sequence"/>
</dbReference>
<dbReference type="GO" id="GO:0005923">
    <property type="term" value="C:bicellular tight junction"/>
    <property type="evidence" value="ECO:0000250"/>
    <property type="project" value="UniProtKB"/>
</dbReference>
<dbReference type="GO" id="GO:0005901">
    <property type="term" value="C:caveola"/>
    <property type="evidence" value="ECO:0000250"/>
    <property type="project" value="UniProtKB"/>
</dbReference>
<dbReference type="GO" id="GO:0071944">
    <property type="term" value="C:cell periphery"/>
    <property type="evidence" value="ECO:0000314"/>
    <property type="project" value="AgBase"/>
</dbReference>
<dbReference type="GO" id="GO:0005737">
    <property type="term" value="C:cytoplasm"/>
    <property type="evidence" value="ECO:0000314"/>
    <property type="project" value="AgBase"/>
</dbReference>
<dbReference type="GO" id="GO:0005789">
    <property type="term" value="C:endoplasmic reticulum membrane"/>
    <property type="evidence" value="ECO:0000315"/>
    <property type="project" value="AgBase"/>
</dbReference>
<dbReference type="GO" id="GO:0016328">
    <property type="term" value="C:lateral plasma membrane"/>
    <property type="evidence" value="ECO:0000250"/>
    <property type="project" value="UniProtKB"/>
</dbReference>
<dbReference type="GO" id="GO:0016020">
    <property type="term" value="C:membrane"/>
    <property type="evidence" value="ECO:0000314"/>
    <property type="project" value="AgBase"/>
</dbReference>
<dbReference type="GO" id="GO:0048471">
    <property type="term" value="C:perinuclear region of cytoplasm"/>
    <property type="evidence" value="ECO:0000314"/>
    <property type="project" value="AgBase"/>
</dbReference>
<dbReference type="GO" id="GO:0005886">
    <property type="term" value="C:plasma membrane"/>
    <property type="evidence" value="ECO:0000315"/>
    <property type="project" value="AgBase"/>
</dbReference>
<dbReference type="GO" id="GO:0042383">
    <property type="term" value="C:sarcolemma"/>
    <property type="evidence" value="ECO:0000250"/>
    <property type="project" value="UniProtKB"/>
</dbReference>
<dbReference type="GO" id="GO:0030552">
    <property type="term" value="F:cAMP binding"/>
    <property type="evidence" value="ECO:0000318"/>
    <property type="project" value="GO_Central"/>
</dbReference>
<dbReference type="GO" id="GO:0005198">
    <property type="term" value="F:structural molecule activity"/>
    <property type="evidence" value="ECO:0000314"/>
    <property type="project" value="UniProtKB"/>
</dbReference>
<dbReference type="GO" id="GO:0090136">
    <property type="term" value="P:epithelial cell-cell adhesion"/>
    <property type="evidence" value="ECO:0000314"/>
    <property type="project" value="UniProtKB"/>
</dbReference>
<dbReference type="GO" id="GO:0003201">
    <property type="term" value="P:epithelial to mesenchymal transition involved in coronary vasculature morphogenesis"/>
    <property type="evidence" value="ECO:0000315"/>
    <property type="project" value="AgBase"/>
</dbReference>
<dbReference type="GO" id="GO:0090132">
    <property type="term" value="P:epithelium migration"/>
    <property type="evidence" value="ECO:0000315"/>
    <property type="project" value="AgBase"/>
</dbReference>
<dbReference type="GO" id="GO:0007507">
    <property type="term" value="P:heart development"/>
    <property type="evidence" value="ECO:0000250"/>
    <property type="project" value="UniProtKB"/>
</dbReference>
<dbReference type="GO" id="GO:0040017">
    <property type="term" value="P:positive regulation of locomotion"/>
    <property type="evidence" value="ECO:0000250"/>
    <property type="project" value="UniProtKB"/>
</dbReference>
<dbReference type="GO" id="GO:0001921">
    <property type="term" value="P:positive regulation of receptor recycling"/>
    <property type="evidence" value="ECO:0000250"/>
    <property type="project" value="UniProtKB"/>
</dbReference>
<dbReference type="GO" id="GO:0051260">
    <property type="term" value="P:protein homooligomerization"/>
    <property type="evidence" value="ECO:0000314"/>
    <property type="project" value="AgBase"/>
</dbReference>
<dbReference type="GO" id="GO:0008360">
    <property type="term" value="P:regulation of cell shape"/>
    <property type="evidence" value="ECO:0000250"/>
    <property type="project" value="UniProtKB"/>
</dbReference>
<dbReference type="GO" id="GO:0043087">
    <property type="term" value="P:regulation of GTPase activity"/>
    <property type="evidence" value="ECO:0000250"/>
    <property type="project" value="UniProtKB"/>
</dbReference>
<dbReference type="GO" id="GO:0042391">
    <property type="term" value="P:regulation of membrane potential"/>
    <property type="evidence" value="ECO:0000318"/>
    <property type="project" value="GO_Central"/>
</dbReference>
<dbReference type="GO" id="GO:0002931">
    <property type="term" value="P:response to ischemia"/>
    <property type="evidence" value="ECO:0000250"/>
    <property type="project" value="UniProtKB"/>
</dbReference>
<dbReference type="GO" id="GO:0007519">
    <property type="term" value="P:skeletal muscle tissue development"/>
    <property type="evidence" value="ECO:0000250"/>
    <property type="project" value="UniProtKB"/>
</dbReference>
<dbReference type="GO" id="GO:0051146">
    <property type="term" value="P:striated muscle cell differentiation"/>
    <property type="evidence" value="ECO:0000318"/>
    <property type="project" value="GO_Central"/>
</dbReference>
<dbReference type="GO" id="GO:0034446">
    <property type="term" value="P:substrate adhesion-dependent cell spreading"/>
    <property type="evidence" value="ECO:0000250"/>
    <property type="project" value="UniProtKB"/>
</dbReference>
<dbReference type="GO" id="GO:0016192">
    <property type="term" value="P:vesicle-mediated transport"/>
    <property type="evidence" value="ECO:0000250"/>
    <property type="project" value="UniProtKB"/>
</dbReference>
<dbReference type="FunFam" id="2.60.120.10:FF:000166">
    <property type="entry name" value="blood vessel epicardial substance isoform X1"/>
    <property type="match status" value="1"/>
</dbReference>
<dbReference type="InterPro" id="IPR018490">
    <property type="entry name" value="cNMP-bd_dom_sf"/>
</dbReference>
<dbReference type="InterPro" id="IPR006916">
    <property type="entry name" value="POPDC1-3"/>
</dbReference>
<dbReference type="InterPro" id="IPR055272">
    <property type="entry name" value="POPDC1-3_dom"/>
</dbReference>
<dbReference type="PANTHER" id="PTHR12101:SF17">
    <property type="entry name" value="BLOOD VESSEL EPICARDIAL SUBSTANCE"/>
    <property type="match status" value="1"/>
</dbReference>
<dbReference type="PANTHER" id="PTHR12101">
    <property type="entry name" value="POPEYE DOMAIN CONTAINING PROTEIN"/>
    <property type="match status" value="1"/>
</dbReference>
<dbReference type="Pfam" id="PF04831">
    <property type="entry name" value="POPDC1-3"/>
    <property type="match status" value="1"/>
</dbReference>
<dbReference type="SUPFAM" id="SSF51206">
    <property type="entry name" value="cAMP-binding domain-like"/>
    <property type="match status" value="1"/>
</dbReference>
<organism>
    <name type="scientific">Gallus gallus</name>
    <name type="common">Chicken</name>
    <dbReference type="NCBI Taxonomy" id="9031"/>
    <lineage>
        <taxon>Eukaryota</taxon>
        <taxon>Metazoa</taxon>
        <taxon>Chordata</taxon>
        <taxon>Craniata</taxon>
        <taxon>Vertebrata</taxon>
        <taxon>Euteleostomi</taxon>
        <taxon>Archelosauria</taxon>
        <taxon>Archosauria</taxon>
        <taxon>Dinosauria</taxon>
        <taxon>Saurischia</taxon>
        <taxon>Theropoda</taxon>
        <taxon>Coelurosauria</taxon>
        <taxon>Aves</taxon>
        <taxon>Neognathae</taxon>
        <taxon>Galloanserae</taxon>
        <taxon>Galliformes</taxon>
        <taxon>Phasianidae</taxon>
        <taxon>Phasianinae</taxon>
        <taxon>Gallus</taxon>
    </lineage>
</organism>
<comment type="function">
    <text evidence="1 2 3 8 9">Cell adhesion molecule involved in the establishment and/or maintenance of cell integrity. Involved in the formation and regulation of the tight junction (TJ) paracellular permeability barrier in epithelial cells. Induces primordial adhesive contact and aggregation of epithelial cells in a Ca(2+)-independent manner. Involved in epithelial movement during corneal sheet formation and regeneration. May play a role in VAMP3-mediated vesicular transport and recycling of receptor molecules. May play a role in the regulation of cell shape and movement by modulating the Rho-GTPase activity. May be involved in skeletal muscle and heart development as well as in the maintenance of heart function (By similarity). May also be involved in striated muscle regeneration and in the regulation of cell spreading.</text>
</comment>
<comment type="subunit">
    <text evidence="10">Homodimer. Homodimerization requires the C-terminus cytoplasmic region.</text>
</comment>
<comment type="subcellular location">
    <subcellularLocation>
        <location evidence="8">Lateral cell membrane</location>
    </subcellularLocation>
    <subcellularLocation>
        <location evidence="9">Cell junction</location>
        <location evidence="9">Tight junction</location>
    </subcellularLocation>
    <subcellularLocation>
        <location evidence="9">Membrane</location>
        <topology evidence="12">Multi-pass membrane protein</topology>
    </subcellularLocation>
    <subcellularLocation>
        <location evidence="3">Cell membrane</location>
        <location evidence="3">Sarcolemma</location>
    </subcellularLocation>
    <subcellularLocation>
        <location evidence="3">Membrane</location>
        <location evidence="3">Caveola</location>
    </subcellularLocation>
    <text evidence="8 9 10">Detected at points of cell-cell contact in confluent epithelial sheets. Colocalizes with components of the adherens and tight junctions.</text>
</comment>
<comment type="alternative products">
    <event type="alternative splicing"/>
    <isoform>
        <id>Q9DG23-1</id>
        <name>1</name>
        <name>POP1A</name>
        <sequence type="displayed"/>
    </isoform>
    <isoform>
        <id>Q9DG23-2</id>
        <name>2</name>
        <name>POP1B</name>
        <sequence type="described" ref="VSP_039263 VSP_039267 VSP_039268"/>
    </isoform>
    <isoform>
        <id>Q9DG23-3</id>
        <name>3</name>
        <name>POP1C</name>
        <sequence type="described" ref="VSP_039262 VSP_039265"/>
    </isoform>
    <isoform>
        <id>Q9DG23-4</id>
        <name>4</name>
        <name>POP1D</name>
        <sequence type="described" ref="VSP_039264 VSP_039266"/>
    </isoform>
</comment>
<comment type="tissue specificity">
    <text evidence="6 7 8">Expressed in the heart and skeletal muscle (at protein level). Isoform 1 and isoform 4: expressed in heart, muscle, brain, stomach, kidney, lung and spleen.</text>
</comment>
<comment type="developmental stage">
    <text evidence="6 8">Expressed during heart development in the proepicardial organ, migrating proepicardial strands, delaminated mesenchymal cells and vascular smooth muscle. Expressed in epithelial precursors of the cornea, lens and retina of the developing eye (at protein level). Expressed in the left ventricular segment of the tubular heart at stage 11. Expressed in the myotome, notochord and ventral half of the neuronal tube.</text>
</comment>
<comment type="miscellaneous">
    <molecule>Isoform 2</molecule>
    <text evidence="12">Incomplete sequence.</text>
</comment>
<comment type="similarity">
    <text evidence="12">Belongs to the popeye family.</text>
</comment>
<comment type="sequence caution" evidence="12">
    <conflict type="erroneous initiation">
        <sequence resource="EMBL-CDS" id="AAD51779"/>
    </conflict>
    <text>Extended N-terminus.</text>
</comment>
<reference key="1">
    <citation type="journal article" date="1999" name="Dev. Biol.">
        <title>bves: a novel gene expressed during coronary blood vessel development.</title>
        <authorList>
            <person name="Reese D.E."/>
            <person name="Zavaljevski M."/>
            <person name="Streiff N.L."/>
            <person name="Bader D."/>
        </authorList>
    </citation>
    <scope>NUCLEOTIDE SEQUENCE [MRNA] (ISOFORM 1)</scope>
    <scope>TISSUE SPECIFICITY</scope>
    <scope>DEVELOPMENTAL STAGE</scope>
    <source>
        <tissue>Heart</tissue>
    </source>
</reference>
<reference key="2">
    <citation type="journal article" date="2000" name="Dev. Biol.">
        <title>Isolation and characterization of the novel popeye gene family expressed in skeletal muscle and heart.</title>
        <authorList>
            <person name="Andree B."/>
            <person name="Hillemann T."/>
            <person name="Kessler-Icekson G."/>
            <person name="Schmitt-John T."/>
            <person name="Jockusch H."/>
            <person name="Arnold H.-H."/>
            <person name="Brand T."/>
        </authorList>
    </citation>
    <scope>NUCLEOTIDE SEQUENCE [MRNA] (ISOFORMS 3 AND 4)</scope>
    <scope>NUCLEOTIDE SEQUENCE [MRNA] OF 37-357 (ISOFORM 2)</scope>
    <scope>TISSUE SPECIFICITY</scope>
</reference>
<reference key="3">
    <citation type="journal article" date="2004" name="Invest. Ophthalmol. Vis. Sci.">
        <title>Bves is expressed in the epithelial components of the retina, lens, and cornea.</title>
        <authorList>
            <person name="Ripley A.N."/>
            <person name="Chang M.S."/>
            <person name="Bader D.M."/>
        </authorList>
    </citation>
    <scope>FUNCTION</scope>
    <scope>SUBCELLULAR LOCATION</scope>
    <scope>TISSUE SPECIFICITY</scope>
    <scope>DEVELOPMENTAL STAGE</scope>
</reference>
<reference key="4">
    <citation type="journal article" date="2005" name="J. Cell Sci.">
        <title>Bves modulates epithelial integrity through an interaction at the tight junction.</title>
        <authorList>
            <person name="Osler M.E."/>
            <person name="Chang M.S."/>
            <person name="Bader D.M."/>
        </authorList>
    </citation>
    <scope>FUNCTION</scope>
    <scope>SUBCELLULAR LOCATION</scope>
</reference>
<reference key="5">
    <citation type="journal article" date="2008" name="PLoS ONE">
        <title>Identification of a novel intracellular interaction domain essential for Bves function.</title>
        <authorList>
            <person name="Kawaguchi M."/>
            <person name="Hager H.A."/>
            <person name="Wada A."/>
            <person name="Koyama T."/>
            <person name="Chang M.S."/>
            <person name="Bader D.M."/>
        </authorList>
    </citation>
    <scope>HOMODIMER</scope>
    <scope>SUBCELLULAR LOCATION</scope>
    <scope>MUTAGENESIS OF LYS-272 AND LYS-273</scope>
</reference>
<evidence type="ECO:0000250" key="1">
    <source>
        <dbReference type="UniProtKB" id="Q5PQZ7"/>
    </source>
</evidence>
<evidence type="ECO:0000250" key="2">
    <source>
        <dbReference type="UniProtKB" id="Q8NE79"/>
    </source>
</evidence>
<evidence type="ECO:0000250" key="3">
    <source>
        <dbReference type="UniProtKB" id="Q9ES83"/>
    </source>
</evidence>
<evidence type="ECO:0000255" key="4"/>
<evidence type="ECO:0000256" key="5">
    <source>
        <dbReference type="SAM" id="MobiDB-lite"/>
    </source>
</evidence>
<evidence type="ECO:0000269" key="6">
    <source>
    </source>
</evidence>
<evidence type="ECO:0000269" key="7">
    <source>
    </source>
</evidence>
<evidence type="ECO:0000269" key="8">
    <source>
    </source>
</evidence>
<evidence type="ECO:0000269" key="9">
    <source>
    </source>
</evidence>
<evidence type="ECO:0000269" key="10">
    <source>
    </source>
</evidence>
<evidence type="ECO:0000303" key="11">
    <source>
    </source>
</evidence>
<evidence type="ECO:0000305" key="12"/>
<accession>Q9DG23</accession>
<accession>Q9DG20</accession>
<accession>Q9DG21</accession>
<accession>Q9DG22</accession>
<accession>Q9PWC0</accession>
<feature type="chain" id="PRO_0000394478" description="Popeye domain-containing protein 1">
    <location>
        <begin position="1"/>
        <end position="357"/>
    </location>
</feature>
<feature type="topological domain" description="Extracellular" evidence="4">
    <location>
        <begin position="1"/>
        <end position="38"/>
    </location>
</feature>
<feature type="transmembrane region" description="Helical" evidence="4">
    <location>
        <begin position="39"/>
        <end position="59"/>
    </location>
</feature>
<feature type="topological domain" description="Cytoplasmic" evidence="4">
    <location>
        <begin position="60"/>
        <end position="62"/>
    </location>
</feature>
<feature type="transmembrane region" description="Helical" evidence="4">
    <location>
        <begin position="63"/>
        <end position="83"/>
    </location>
</feature>
<feature type="topological domain" description="Extracellular" evidence="4">
    <location>
        <begin position="84"/>
        <end position="89"/>
    </location>
</feature>
<feature type="transmembrane region" description="Helical" evidence="4">
    <location>
        <begin position="90"/>
        <end position="110"/>
    </location>
</feature>
<feature type="topological domain" description="Cytoplasmic" evidence="4">
    <location>
        <begin position="111"/>
        <end position="357"/>
    </location>
</feature>
<feature type="region of interest" description="Disordered" evidence="5">
    <location>
        <begin position="309"/>
        <end position="357"/>
    </location>
</feature>
<feature type="compositionally biased region" description="Low complexity" evidence="5">
    <location>
        <begin position="309"/>
        <end position="323"/>
    </location>
</feature>
<feature type="compositionally biased region" description="Basic and acidic residues" evidence="5">
    <location>
        <begin position="347"/>
        <end position="357"/>
    </location>
</feature>
<feature type="glycosylation site" description="N-linked (GlcNAc...) asparagine" evidence="4">
    <location>
        <position position="20"/>
    </location>
</feature>
<feature type="glycosylation site" description="N-linked (GlcNAc...) asparagine" evidence="4">
    <location>
        <position position="27"/>
    </location>
</feature>
<feature type="splice variant" id="VSP_039262" description="In isoform 3." evidence="11">
    <original>MDTTAISPLTPLGVIPDLKNATSVPFNETACENWKEIHHLVFHVANICFAAGLVIPTTLNLHMIFLRGLLTVGCALFIIWATLYRCALDIMIWNSVFLVVNLLHFIYLVYKRRPIKIEKELSSLYKRMFEPLHVPPELFQRLTGQFCNIQTLKTG</original>
    <variation>MLPPMVPGSSNSRIRVPW</variation>
    <location>
        <begin position="1"/>
        <end position="155"/>
    </location>
</feature>
<feature type="splice variant" id="VSP_039263" description="In isoform 2." evidence="11">
    <original>MDTTAISPLTPLGVIPDLKNATSVPFNETACENWKEIHHLVFHV</original>
    <variation>NSRIRVPW</variation>
    <location>
        <begin position="1"/>
        <end position="44"/>
    </location>
</feature>
<feature type="splice variant" id="VSP_039264" description="In isoform 4." evidence="11">
    <original>M</original>
    <variation>MGENASFWESLIYAHPTCVTWKQEAEGSIYHLASILFVVGFMGGSGFSGLLYVFSLLGLGFLCSSVWAWLDVCAADIFSWNFILFAICFVQFIYVTYQVRSVSFDKEFQELYSALFQPLGISLTVYRKIVLCCDAEVITLEKEHCYAMQGKTPIDKLSLLVSGRIRVTVDGEFLHYIFPLQFLDSPEWDSLRPTEEGIFQVTLTAETDCRYVAWRRKKLYLLFAKHRFISRLFSILIGSDIAEKLYALNDRCTWGRGLGFFKM</variation>
    <location>
        <position position="1"/>
    </location>
</feature>
<feature type="splice variant" id="VSP_039265" description="In isoform 3." evidence="11">
    <original>RPGRTSPYLRTSAKMKPIEESVEDDVFEAPSAEKLELQRLP</original>
    <variation>LTGPAEPPPLIGSSIASARKLSTTVSRNLLAYLCLALLPPDMGSQSSQVPRPSTVNIIQLSEEGFHLLALLDQAADTCWKSPVLVCSLILPISSQLAFHLFQGKALCTGAGPLHRRHLNKLALSEA</variation>
    <location>
        <begin position="317"/>
        <end position="357"/>
    </location>
</feature>
<feature type="splice variant" id="VSP_039266" description="In isoform 4." evidence="11">
    <original>RPGRTSPYLRTSAKMKPIEESVEDDVFEAPSAEKLELQRLP</original>
    <variation>LTGPAEPPPLIGSSIASARKLSTTVSRNLLAYLCLALLPPDMGSQSSEVPRPSTVKTSSSYLKKASIYLLFLIRQQIPAVKSPVLVCSLIFTHKLSAGFSPVSRQSSMHWSWSFA</variation>
    <location>
        <begin position="317"/>
        <end position="357"/>
    </location>
</feature>
<feature type="splice variant" id="VSP_039267" description="In isoform 2." evidence="11">
    <original>PGRTSPY</original>
    <variation>NNPTRVL</variation>
    <location>
        <begin position="318"/>
        <end position="324"/>
    </location>
</feature>
<feature type="splice variant" id="VSP_039268" description="In isoform 2." evidence="11">
    <location>
        <begin position="325"/>
        <end position="357"/>
    </location>
</feature>
<feature type="mutagenesis site" description="Abolishes homodimerization and cell-cell adhesion; when associated with A-273." evidence="10">
    <original>K</original>
    <variation>A</variation>
    <location>
        <position position="272"/>
    </location>
</feature>
<feature type="mutagenesis site" description="Abolishes homodimerization and cell-cell adhesion; when associated with A-272." evidence="10">
    <original>K</original>
    <variation>A</variation>
    <location>
        <position position="273"/>
    </location>
</feature>
<feature type="sequence conflict" description="In Ref. 1; AAD51779." evidence="12" ref="1">
    <original>ST</original>
    <variation>RS</variation>
    <location>
        <begin position="295"/>
        <end position="296"/>
    </location>
</feature>
<name>POPD1_CHICK</name>
<gene>
    <name type="primary">POPDC1</name>
    <name type="synonym">BVES</name>
    <name type="synonym">POP1</name>
</gene>
<sequence>MDTTAISPLTPLGVIPDLKNATSVPFNETACENWKEIHHLVFHVANICFAAGLVIPTTLNLHMIFLRGLLTVGCALFIIWATLYRCALDIMIWNSVFLVVNLLHFIYLVYKRRPIKIEKELSSLYKRMFEPLHVPPELFQRLTGQFCNIQTLKTGQAYAAEDKTSVDDRLSILLKGKMKVSYRGHFLHNIYPCAFIDSPEFRSTQMNRGEKFQVTIIADDNCKFLCWSRERLTYFLETEPFLYEIFKYLIGKDITNKLYSLNDPTLNDKASKKIDRQPSLCSQLSVMQMRNSMASTSDSEDGLQMFLRGTSSSSSLRPGRTSPYLRTSAKMKPIEESVEDDVFEAPSAEKLELQRLP</sequence>
<proteinExistence type="evidence at protein level"/>
<keyword id="KW-0025">Alternative splicing</keyword>
<keyword id="KW-0114">cAMP</keyword>
<keyword id="KW-0116">cAMP-binding</keyword>
<keyword id="KW-0130">Cell adhesion</keyword>
<keyword id="KW-0965">Cell junction</keyword>
<keyword id="KW-1003">Cell membrane</keyword>
<keyword id="KW-0217">Developmental protein</keyword>
<keyword id="KW-0325">Glycoprotein</keyword>
<keyword id="KW-0472">Membrane</keyword>
<keyword id="KW-0547">Nucleotide-binding</keyword>
<keyword id="KW-1185">Reference proteome</keyword>
<keyword id="KW-0796">Tight junction</keyword>
<keyword id="KW-0812">Transmembrane</keyword>
<keyword id="KW-1133">Transmembrane helix</keyword>
<protein>
    <recommendedName>
        <fullName>Popeye domain-containing protein 1</fullName>
        <shortName>Popeye protein 1</shortName>
    </recommendedName>
    <alternativeName>
        <fullName>Blood vessel epicardial substance</fullName>
    </alternativeName>
</protein>